<evidence type="ECO:0000250" key="1">
    <source>
        <dbReference type="UniProtKB" id="P26321"/>
    </source>
</evidence>
<evidence type="ECO:0000256" key="2">
    <source>
        <dbReference type="SAM" id="MobiDB-lite"/>
    </source>
</evidence>
<evidence type="ECO:0000305" key="3"/>
<dbReference type="EMBL" id="HE600970">
    <property type="protein sequence ID" value="CAP22065.2"/>
    <property type="molecule type" value="Genomic_DNA"/>
</dbReference>
<dbReference type="SMR" id="Q627R7"/>
<dbReference type="FunCoup" id="Q627R7">
    <property type="interactions" value="2075"/>
</dbReference>
<dbReference type="STRING" id="6238.Q627R7"/>
<dbReference type="EnsemblMetazoa" id="CBG00561.1">
    <property type="protein sequence ID" value="CBG00561.1"/>
    <property type="gene ID" value="WBGene00023936"/>
</dbReference>
<dbReference type="WormBase" id="CBG00561">
    <property type="protein sequence ID" value="CBP35751"/>
    <property type="gene ID" value="WBGene00023936"/>
    <property type="gene designation" value="Cbr-rpl-5"/>
</dbReference>
<dbReference type="eggNOG" id="KOG0875">
    <property type="taxonomic scope" value="Eukaryota"/>
</dbReference>
<dbReference type="HOGENOM" id="CLU_056222_1_0_1"/>
<dbReference type="InParanoid" id="Q627R7"/>
<dbReference type="OMA" id="CQIASAH"/>
<dbReference type="Proteomes" id="UP000008549">
    <property type="component" value="Unassembled WGS sequence"/>
</dbReference>
<dbReference type="GO" id="GO:0022625">
    <property type="term" value="C:cytosolic large ribosomal subunit"/>
    <property type="evidence" value="ECO:0000318"/>
    <property type="project" value="GO_Central"/>
</dbReference>
<dbReference type="GO" id="GO:0005634">
    <property type="term" value="C:nucleus"/>
    <property type="evidence" value="ECO:0007669"/>
    <property type="project" value="UniProtKB-SubCell"/>
</dbReference>
<dbReference type="GO" id="GO:0008097">
    <property type="term" value="F:5S rRNA binding"/>
    <property type="evidence" value="ECO:0000318"/>
    <property type="project" value="GO_Central"/>
</dbReference>
<dbReference type="GO" id="GO:0003735">
    <property type="term" value="F:structural constituent of ribosome"/>
    <property type="evidence" value="ECO:0000318"/>
    <property type="project" value="GO_Central"/>
</dbReference>
<dbReference type="GO" id="GO:0000027">
    <property type="term" value="P:ribosomal large subunit assembly"/>
    <property type="evidence" value="ECO:0000318"/>
    <property type="project" value="GO_Central"/>
</dbReference>
<dbReference type="GO" id="GO:0006412">
    <property type="term" value="P:translation"/>
    <property type="evidence" value="ECO:0007669"/>
    <property type="project" value="InterPro"/>
</dbReference>
<dbReference type="CDD" id="cd00432">
    <property type="entry name" value="Ribosomal_L18_L5e"/>
    <property type="match status" value="1"/>
</dbReference>
<dbReference type="FunFam" id="3.30.420.100:FF:000002">
    <property type="entry name" value="60S ribosomal protein L5"/>
    <property type="match status" value="1"/>
</dbReference>
<dbReference type="Gene3D" id="3.30.420.100">
    <property type="match status" value="1"/>
</dbReference>
<dbReference type="HAMAP" id="MF_01337_A">
    <property type="entry name" value="Ribosomal_uL18_A"/>
    <property type="match status" value="1"/>
</dbReference>
<dbReference type="InterPro" id="IPR005485">
    <property type="entry name" value="Rbsml_uL18_euk"/>
</dbReference>
<dbReference type="InterPro" id="IPR025607">
    <property type="entry name" value="Ribosomal_uL18_C_euk"/>
</dbReference>
<dbReference type="PANTHER" id="PTHR23410:SF12">
    <property type="entry name" value="LARGE RIBOSOMAL SUBUNIT PROTEIN UL18"/>
    <property type="match status" value="1"/>
</dbReference>
<dbReference type="PANTHER" id="PTHR23410">
    <property type="entry name" value="RIBOSOMAL PROTEIN L5-RELATED"/>
    <property type="match status" value="1"/>
</dbReference>
<dbReference type="Pfam" id="PF14204">
    <property type="entry name" value="Ribosomal_L18_c"/>
    <property type="match status" value="1"/>
</dbReference>
<dbReference type="Pfam" id="PF17144">
    <property type="entry name" value="Ribosomal_L5e"/>
    <property type="match status" value="1"/>
</dbReference>
<dbReference type="PRINTS" id="PR00058">
    <property type="entry name" value="RIBOSOMALL5"/>
</dbReference>
<dbReference type="SUPFAM" id="SSF53137">
    <property type="entry name" value="Translational machinery components"/>
    <property type="match status" value="1"/>
</dbReference>
<protein>
    <recommendedName>
        <fullName evidence="3">Large ribosomal subunit protein uL18</fullName>
    </recommendedName>
    <alternativeName>
        <fullName>60S ribosomal protein L5</fullName>
    </alternativeName>
</protein>
<organism>
    <name type="scientific">Caenorhabditis briggsae</name>
    <dbReference type="NCBI Taxonomy" id="6238"/>
    <lineage>
        <taxon>Eukaryota</taxon>
        <taxon>Metazoa</taxon>
        <taxon>Ecdysozoa</taxon>
        <taxon>Nematoda</taxon>
        <taxon>Chromadorea</taxon>
        <taxon>Rhabditida</taxon>
        <taxon>Rhabditina</taxon>
        <taxon>Rhabditomorpha</taxon>
        <taxon>Rhabditoidea</taxon>
        <taxon>Rhabditidae</taxon>
        <taxon>Peloderinae</taxon>
        <taxon>Caenorhabditis</taxon>
    </lineage>
</organism>
<gene>
    <name type="primary">rpl-5</name>
    <name type="ORF">CBG00561</name>
</gene>
<keyword id="KW-0963">Cytoplasm</keyword>
<keyword id="KW-0539">Nucleus</keyword>
<keyword id="KW-1185">Reference proteome</keyword>
<keyword id="KW-0687">Ribonucleoprotein</keyword>
<keyword id="KW-0689">Ribosomal protein</keyword>
<keyword id="KW-0694">RNA-binding</keyword>
<keyword id="KW-0699">rRNA-binding</keyword>
<sequence length="294" mass="33466">MGLVKVIKNKAYFKRYQVKLKRRREGKTDYYARKRLTVQDKNKYNTPKYRLIVRLTNKDIVAQLAYSKIEGDVVVASAYAHELPRYGLKAGLTNYAAAYATGLLLARRHLKAIGLDSTYKGHEELTGEDYNVEEEGDRAPFKAVLDIGLARTTTGSKIFAVMKGVADGGINVPHSESRFFGFDQESKDYNAEAHRDRILGKHVADYMSLLKEEDEDRYKRQFSKFLSNGMNADNLVATYQKAHANIRADPSPSAKKAAKPSKRHTAKRLTYDERKQRVADKKALLLQLKEQQQE</sequence>
<feature type="chain" id="PRO_0000291562" description="Large ribosomal subunit protein uL18">
    <location>
        <begin position="1"/>
        <end position="294"/>
    </location>
</feature>
<feature type="region of interest" description="Disordered" evidence="2">
    <location>
        <begin position="247"/>
        <end position="275"/>
    </location>
</feature>
<feature type="compositionally biased region" description="Basic residues" evidence="2">
    <location>
        <begin position="256"/>
        <end position="267"/>
    </location>
</feature>
<name>RL5_CAEBR</name>
<accession>Q627R7</accession>
<accession>A8WNL0</accession>
<comment type="function">
    <text evidence="1">Component of the ribosome, a large ribonucleoprotein complex responsible for the synthesis of proteins in the cell. The small ribosomal subunit (SSU) binds messenger RNAs (mRNAs) and translates the encoded message by selecting cognate aminoacyl-transfer RNA (tRNA) molecules. The large subunit (LSU) contains the ribosomal catalytic site termed the peptidyl transferase center (PTC), which catalyzes the formation of peptide bonds, thereby polymerizing the amino acids delivered by tRNAs into a polypeptide chain. The nascent polypeptides leave the ribosome through a tunnel in the LSU and interact with protein factors that function in enzymatic processing, targeting, and the membrane insertion of nascent chains at the exit of the ribosomal tunnel.</text>
</comment>
<comment type="subunit">
    <text evidence="1">Component of the large ribosomal subunit (LSU).</text>
</comment>
<comment type="subcellular location">
    <subcellularLocation>
        <location evidence="1">Cytoplasm</location>
    </subcellularLocation>
    <subcellularLocation>
        <location evidence="1">Nucleus</location>
    </subcellularLocation>
</comment>
<comment type="similarity">
    <text evidence="3">Belongs to the universal ribosomal protein uL18 family.</text>
</comment>
<reference key="1">
    <citation type="journal article" date="2003" name="PLoS Biol.">
        <title>The genome sequence of Caenorhabditis briggsae: a platform for comparative genomics.</title>
        <authorList>
            <person name="Stein L.D."/>
            <person name="Bao Z."/>
            <person name="Blasiar D."/>
            <person name="Blumenthal T."/>
            <person name="Brent M.R."/>
            <person name="Chen N."/>
            <person name="Chinwalla A."/>
            <person name="Clarke L."/>
            <person name="Clee C."/>
            <person name="Coghlan A."/>
            <person name="Coulson A."/>
            <person name="D'Eustachio P."/>
            <person name="Fitch D.H.A."/>
            <person name="Fulton L.A."/>
            <person name="Fulton R.E."/>
            <person name="Griffiths-Jones S."/>
            <person name="Harris T.W."/>
            <person name="Hillier L.W."/>
            <person name="Kamath R."/>
            <person name="Kuwabara P.E."/>
            <person name="Mardis E.R."/>
            <person name="Marra M.A."/>
            <person name="Miner T.L."/>
            <person name="Minx P."/>
            <person name="Mullikin J.C."/>
            <person name="Plumb R.W."/>
            <person name="Rogers J."/>
            <person name="Schein J.E."/>
            <person name="Sohrmann M."/>
            <person name="Spieth J."/>
            <person name="Stajich J.E."/>
            <person name="Wei C."/>
            <person name="Willey D."/>
            <person name="Wilson R.K."/>
            <person name="Durbin R.M."/>
            <person name="Waterston R.H."/>
        </authorList>
    </citation>
    <scope>NUCLEOTIDE SEQUENCE [LARGE SCALE GENOMIC DNA]</scope>
    <source>
        <strain>AF16</strain>
    </source>
</reference>
<proteinExistence type="inferred from homology"/>